<evidence type="ECO:0000255" key="1">
    <source>
        <dbReference type="HAMAP-Rule" id="MF_00073"/>
    </source>
</evidence>
<comment type="function">
    <text evidence="1">Involved in transcription antitermination. Required for transcription of ribosomal RNA (rRNA) genes. Binds specifically to the boxA antiterminator sequence of the ribosomal RNA (rrn) operons.</text>
</comment>
<comment type="similarity">
    <text evidence="1">Belongs to the NusB family.</text>
</comment>
<name>NUSB_SALCH</name>
<dbReference type="EMBL" id="AE017220">
    <property type="protein sequence ID" value="AAX64365.1"/>
    <property type="molecule type" value="Genomic_DNA"/>
</dbReference>
<dbReference type="RefSeq" id="WP_000801129.1">
    <property type="nucleotide sequence ID" value="NC_006905.1"/>
</dbReference>
<dbReference type="SMR" id="Q57SE6"/>
<dbReference type="GeneID" id="89550189"/>
<dbReference type="KEGG" id="sec:SCH_0459"/>
<dbReference type="HOGENOM" id="CLU_087843_4_1_6"/>
<dbReference type="Proteomes" id="UP000000538">
    <property type="component" value="Chromosome"/>
</dbReference>
<dbReference type="GO" id="GO:0005829">
    <property type="term" value="C:cytosol"/>
    <property type="evidence" value="ECO:0007669"/>
    <property type="project" value="TreeGrafter"/>
</dbReference>
<dbReference type="GO" id="GO:0003723">
    <property type="term" value="F:RNA binding"/>
    <property type="evidence" value="ECO:0007669"/>
    <property type="project" value="UniProtKB-UniRule"/>
</dbReference>
<dbReference type="GO" id="GO:0006353">
    <property type="term" value="P:DNA-templated transcription termination"/>
    <property type="evidence" value="ECO:0007669"/>
    <property type="project" value="UniProtKB-UniRule"/>
</dbReference>
<dbReference type="GO" id="GO:0031564">
    <property type="term" value="P:transcription antitermination"/>
    <property type="evidence" value="ECO:0007669"/>
    <property type="project" value="UniProtKB-KW"/>
</dbReference>
<dbReference type="CDD" id="cd00619">
    <property type="entry name" value="Terminator_NusB"/>
    <property type="match status" value="1"/>
</dbReference>
<dbReference type="FunFam" id="1.10.940.10:FF:000001">
    <property type="entry name" value="Transcription antitermination factor NusB"/>
    <property type="match status" value="1"/>
</dbReference>
<dbReference type="Gene3D" id="1.10.940.10">
    <property type="entry name" value="NusB-like"/>
    <property type="match status" value="1"/>
</dbReference>
<dbReference type="HAMAP" id="MF_00073">
    <property type="entry name" value="NusB"/>
    <property type="match status" value="1"/>
</dbReference>
<dbReference type="InterPro" id="IPR035926">
    <property type="entry name" value="NusB-like_sf"/>
</dbReference>
<dbReference type="InterPro" id="IPR011605">
    <property type="entry name" value="NusB_fam"/>
</dbReference>
<dbReference type="InterPro" id="IPR006027">
    <property type="entry name" value="NusB_RsmB_TIM44"/>
</dbReference>
<dbReference type="NCBIfam" id="TIGR01951">
    <property type="entry name" value="nusB"/>
    <property type="match status" value="1"/>
</dbReference>
<dbReference type="PANTHER" id="PTHR11078:SF3">
    <property type="entry name" value="ANTITERMINATION NUSB DOMAIN-CONTAINING PROTEIN"/>
    <property type="match status" value="1"/>
</dbReference>
<dbReference type="PANTHER" id="PTHR11078">
    <property type="entry name" value="N UTILIZATION SUBSTANCE PROTEIN B-RELATED"/>
    <property type="match status" value="1"/>
</dbReference>
<dbReference type="Pfam" id="PF01029">
    <property type="entry name" value="NusB"/>
    <property type="match status" value="1"/>
</dbReference>
<dbReference type="SUPFAM" id="SSF48013">
    <property type="entry name" value="NusB-like"/>
    <property type="match status" value="1"/>
</dbReference>
<sequence length="139" mass="15689">MKPAARRRARECAVQALYSWQLSQNDIADVEYQFLAEQDVKDVDVLYFRELLSGVATNSAYLDGLMKPYLSRLLEELGQVEKAVLRIALFELSKRSDVPYKVAINEAIELAKTFGAEDSHKFVNGVLDKAAPVIRPNKK</sequence>
<reference key="1">
    <citation type="journal article" date="2005" name="Nucleic Acids Res.">
        <title>The genome sequence of Salmonella enterica serovar Choleraesuis, a highly invasive and resistant zoonotic pathogen.</title>
        <authorList>
            <person name="Chiu C.-H."/>
            <person name="Tang P."/>
            <person name="Chu C."/>
            <person name="Hu S."/>
            <person name="Bao Q."/>
            <person name="Yu J."/>
            <person name="Chou Y.-Y."/>
            <person name="Wang H.-S."/>
            <person name="Lee Y.-S."/>
        </authorList>
    </citation>
    <scope>NUCLEOTIDE SEQUENCE [LARGE SCALE GENOMIC DNA]</scope>
    <source>
        <strain>SC-B67</strain>
    </source>
</reference>
<organism>
    <name type="scientific">Salmonella choleraesuis (strain SC-B67)</name>
    <dbReference type="NCBI Taxonomy" id="321314"/>
    <lineage>
        <taxon>Bacteria</taxon>
        <taxon>Pseudomonadati</taxon>
        <taxon>Pseudomonadota</taxon>
        <taxon>Gammaproteobacteria</taxon>
        <taxon>Enterobacterales</taxon>
        <taxon>Enterobacteriaceae</taxon>
        <taxon>Salmonella</taxon>
    </lineage>
</organism>
<keyword id="KW-0694">RNA-binding</keyword>
<keyword id="KW-0804">Transcription</keyword>
<keyword id="KW-0889">Transcription antitermination</keyword>
<keyword id="KW-0805">Transcription regulation</keyword>
<proteinExistence type="inferred from homology"/>
<accession>Q57SE6</accession>
<protein>
    <recommendedName>
        <fullName evidence="1">Transcription antitermination protein NusB</fullName>
    </recommendedName>
    <alternativeName>
        <fullName evidence="1">Antitermination factor NusB</fullName>
    </alternativeName>
</protein>
<gene>
    <name evidence="1" type="primary">nusB</name>
    <name type="ordered locus">SCH_0459</name>
</gene>
<feature type="chain" id="PRO_0000265586" description="Transcription antitermination protein NusB">
    <location>
        <begin position="1"/>
        <end position="139"/>
    </location>
</feature>